<sequence length="97" mass="10869">MSRACELTGKSVQYGNNVSHANNRTRRRFLPNLCNVTLISETLGQSYRLRISANALRSVEHRGGLDAFLVKSDDKELSQRARLLKRQIAKKQAEAAA</sequence>
<protein>
    <recommendedName>
        <fullName evidence="1">Large ribosomal subunit protein bL28</fullName>
    </recommendedName>
    <alternativeName>
        <fullName evidence="2">50S ribosomal protein L28</fullName>
    </alternativeName>
</protein>
<organism>
    <name type="scientific">Brucella suis biovar 1 (strain 1330)</name>
    <dbReference type="NCBI Taxonomy" id="204722"/>
    <lineage>
        <taxon>Bacteria</taxon>
        <taxon>Pseudomonadati</taxon>
        <taxon>Pseudomonadota</taxon>
        <taxon>Alphaproteobacteria</taxon>
        <taxon>Hyphomicrobiales</taxon>
        <taxon>Brucellaceae</taxon>
        <taxon>Brucella/Ochrobactrum group</taxon>
        <taxon>Brucella</taxon>
    </lineage>
</organism>
<accession>P66141</accession>
<accession>G0K8N5</accession>
<accession>Q8YJM6</accession>
<proteinExistence type="inferred from homology"/>
<reference key="1">
    <citation type="journal article" date="2002" name="Proc. Natl. Acad. Sci. U.S.A.">
        <title>The Brucella suis genome reveals fundamental similarities between animal and plant pathogens and symbionts.</title>
        <authorList>
            <person name="Paulsen I.T."/>
            <person name="Seshadri R."/>
            <person name="Nelson K.E."/>
            <person name="Eisen J.A."/>
            <person name="Heidelberg J.F."/>
            <person name="Read T.D."/>
            <person name="Dodson R.J."/>
            <person name="Umayam L.A."/>
            <person name="Brinkac L.M."/>
            <person name="Beanan M.J."/>
            <person name="Daugherty S.C."/>
            <person name="DeBoy R.T."/>
            <person name="Durkin A.S."/>
            <person name="Kolonay J.F."/>
            <person name="Madupu R."/>
            <person name="Nelson W.C."/>
            <person name="Ayodeji B."/>
            <person name="Kraul M."/>
            <person name="Shetty J."/>
            <person name="Malek J.A."/>
            <person name="Van Aken S.E."/>
            <person name="Riedmuller S."/>
            <person name="Tettelin H."/>
            <person name="Gill S.R."/>
            <person name="White O."/>
            <person name="Salzberg S.L."/>
            <person name="Hoover D.L."/>
            <person name="Lindler L.E."/>
            <person name="Halling S.M."/>
            <person name="Boyle S.M."/>
            <person name="Fraser C.M."/>
        </authorList>
    </citation>
    <scope>NUCLEOTIDE SEQUENCE [LARGE SCALE GENOMIC DNA]</scope>
    <source>
        <strain>1330</strain>
    </source>
</reference>
<reference key="2">
    <citation type="journal article" date="2011" name="J. Bacteriol.">
        <title>Revised genome sequence of Brucella suis 1330.</title>
        <authorList>
            <person name="Tae H."/>
            <person name="Shallom S."/>
            <person name="Settlage R."/>
            <person name="Preston D."/>
            <person name="Adams L.G."/>
            <person name="Garner H.R."/>
        </authorList>
    </citation>
    <scope>NUCLEOTIDE SEQUENCE [LARGE SCALE GENOMIC DNA]</scope>
    <source>
        <strain>1330</strain>
    </source>
</reference>
<keyword id="KW-0687">Ribonucleoprotein</keyword>
<keyword id="KW-0689">Ribosomal protein</keyword>
<feature type="chain" id="PRO_0000178443" description="Large ribosomal subunit protein bL28">
    <location>
        <begin position="1"/>
        <end position="97"/>
    </location>
</feature>
<dbReference type="EMBL" id="AE014291">
    <property type="protein sequence ID" value="AAN30905.1"/>
    <property type="molecule type" value="Genomic_DNA"/>
</dbReference>
<dbReference type="EMBL" id="CP002997">
    <property type="protein sequence ID" value="AEM19322.1"/>
    <property type="molecule type" value="Genomic_DNA"/>
</dbReference>
<dbReference type="RefSeq" id="WP_002965079.1">
    <property type="nucleotide sequence ID" value="NZ_KN046804.1"/>
</dbReference>
<dbReference type="SMR" id="P66141"/>
<dbReference type="GeneID" id="97534716"/>
<dbReference type="KEGG" id="bms:BR2015"/>
<dbReference type="KEGG" id="bsi:BS1330_I2009"/>
<dbReference type="PATRIC" id="fig|204722.21.peg.3327"/>
<dbReference type="HOGENOM" id="CLU_064548_4_2_5"/>
<dbReference type="Proteomes" id="UP000007104">
    <property type="component" value="Chromosome I"/>
</dbReference>
<dbReference type="GO" id="GO:0022625">
    <property type="term" value="C:cytosolic large ribosomal subunit"/>
    <property type="evidence" value="ECO:0007669"/>
    <property type="project" value="TreeGrafter"/>
</dbReference>
<dbReference type="GO" id="GO:0003735">
    <property type="term" value="F:structural constituent of ribosome"/>
    <property type="evidence" value="ECO:0007669"/>
    <property type="project" value="InterPro"/>
</dbReference>
<dbReference type="GO" id="GO:0006412">
    <property type="term" value="P:translation"/>
    <property type="evidence" value="ECO:0007669"/>
    <property type="project" value="UniProtKB-UniRule"/>
</dbReference>
<dbReference type="Gene3D" id="2.30.170.40">
    <property type="entry name" value="Ribosomal protein L28/L24"/>
    <property type="match status" value="1"/>
</dbReference>
<dbReference type="HAMAP" id="MF_00373">
    <property type="entry name" value="Ribosomal_bL28"/>
    <property type="match status" value="1"/>
</dbReference>
<dbReference type="InterPro" id="IPR026569">
    <property type="entry name" value="Ribosomal_bL28"/>
</dbReference>
<dbReference type="InterPro" id="IPR034704">
    <property type="entry name" value="Ribosomal_bL28/bL31-like_sf"/>
</dbReference>
<dbReference type="InterPro" id="IPR001383">
    <property type="entry name" value="Ribosomal_bL28_bact-type"/>
</dbReference>
<dbReference type="InterPro" id="IPR037147">
    <property type="entry name" value="Ribosomal_bL28_sf"/>
</dbReference>
<dbReference type="NCBIfam" id="TIGR00009">
    <property type="entry name" value="L28"/>
    <property type="match status" value="1"/>
</dbReference>
<dbReference type="PANTHER" id="PTHR13528">
    <property type="entry name" value="39S RIBOSOMAL PROTEIN L28, MITOCHONDRIAL"/>
    <property type="match status" value="1"/>
</dbReference>
<dbReference type="PANTHER" id="PTHR13528:SF2">
    <property type="entry name" value="LARGE RIBOSOMAL SUBUNIT PROTEIN BL28M"/>
    <property type="match status" value="1"/>
</dbReference>
<dbReference type="Pfam" id="PF00830">
    <property type="entry name" value="Ribosomal_L28"/>
    <property type="match status" value="1"/>
</dbReference>
<dbReference type="SUPFAM" id="SSF143800">
    <property type="entry name" value="L28p-like"/>
    <property type="match status" value="1"/>
</dbReference>
<gene>
    <name evidence="1" type="primary">rpmB</name>
    <name type="ordered locus">BR2015</name>
    <name type="ordered locus">BS1330_I2009</name>
</gene>
<comment type="similarity">
    <text evidence="1">Belongs to the bacterial ribosomal protein bL28 family.</text>
</comment>
<evidence type="ECO:0000255" key="1">
    <source>
        <dbReference type="HAMAP-Rule" id="MF_00373"/>
    </source>
</evidence>
<evidence type="ECO:0000305" key="2"/>
<name>RL28_BRUSU</name>